<proteinExistence type="inferred from homology"/>
<reference key="1">
    <citation type="journal article" date="2009" name="J. Bacteriol.">
        <title>Genome sequences of three Agrobacterium biovars help elucidate the evolution of multichromosome genomes in bacteria.</title>
        <authorList>
            <person name="Slater S.C."/>
            <person name="Goldman B.S."/>
            <person name="Goodner B."/>
            <person name="Setubal J.C."/>
            <person name="Farrand S.K."/>
            <person name="Nester E.W."/>
            <person name="Burr T.J."/>
            <person name="Banta L."/>
            <person name="Dickerman A.W."/>
            <person name="Paulsen I."/>
            <person name="Otten L."/>
            <person name="Suen G."/>
            <person name="Welch R."/>
            <person name="Almeida N.F."/>
            <person name="Arnold F."/>
            <person name="Burton O.T."/>
            <person name="Du Z."/>
            <person name="Ewing A."/>
            <person name="Godsy E."/>
            <person name="Heisel S."/>
            <person name="Houmiel K.L."/>
            <person name="Jhaveri J."/>
            <person name="Lu J."/>
            <person name="Miller N.M."/>
            <person name="Norton S."/>
            <person name="Chen Q."/>
            <person name="Phoolcharoen W."/>
            <person name="Ohlin V."/>
            <person name="Ondrusek D."/>
            <person name="Pride N."/>
            <person name="Stricklin S.L."/>
            <person name="Sun J."/>
            <person name="Wheeler C."/>
            <person name="Wilson L."/>
            <person name="Zhu H."/>
            <person name="Wood D.W."/>
        </authorList>
    </citation>
    <scope>NUCLEOTIDE SEQUENCE [LARGE SCALE GENOMIC DNA]</scope>
    <source>
        <strain>K84 / ATCC BAA-868</strain>
    </source>
</reference>
<keyword id="KW-0687">Ribonucleoprotein</keyword>
<keyword id="KW-0689">Ribosomal protein</keyword>
<keyword id="KW-0694">RNA-binding</keyword>
<keyword id="KW-0699">rRNA-binding</keyword>
<keyword id="KW-0820">tRNA-binding</keyword>
<protein>
    <recommendedName>
        <fullName evidence="1">Small ribosomal subunit protein uS7</fullName>
    </recommendedName>
    <alternativeName>
        <fullName evidence="2">30S ribosomal protein S7</fullName>
    </alternativeName>
</protein>
<comment type="function">
    <text evidence="1">One of the primary rRNA binding proteins, it binds directly to 16S rRNA where it nucleates assembly of the head domain of the 30S subunit. Is located at the subunit interface close to the decoding center, probably blocks exit of the E-site tRNA.</text>
</comment>
<comment type="subunit">
    <text evidence="1">Part of the 30S ribosomal subunit. Contacts proteins S9 and S11.</text>
</comment>
<comment type="similarity">
    <text evidence="1">Belongs to the universal ribosomal protein uS7 family.</text>
</comment>
<sequence length="156" mass="17725">MSRRHRAEKREINPDPKFGDLIVTKFMNAIMLDGKKSVAESIVYGAFDAVQGKAKQEPLGVFHQALDNIAPHVEVRSRRVGGATYQVPVDVRPERRQALAIRWLITAARKRNETTMVDRLCGELLDASNNRGSAVKKREDTHKMADANRAFSHYRW</sequence>
<name>RS7_RHIR8</name>
<organism>
    <name type="scientific">Rhizobium rhizogenes (strain K84 / ATCC BAA-868)</name>
    <name type="common">Agrobacterium radiobacter</name>
    <dbReference type="NCBI Taxonomy" id="311403"/>
    <lineage>
        <taxon>Bacteria</taxon>
        <taxon>Pseudomonadati</taxon>
        <taxon>Pseudomonadota</taxon>
        <taxon>Alphaproteobacteria</taxon>
        <taxon>Hyphomicrobiales</taxon>
        <taxon>Rhizobiaceae</taxon>
        <taxon>Rhizobium/Agrobacterium group</taxon>
        <taxon>Rhizobium</taxon>
    </lineage>
</organism>
<feature type="chain" id="PRO_1000135571" description="Small ribosomal subunit protein uS7">
    <location>
        <begin position="1"/>
        <end position="156"/>
    </location>
</feature>
<evidence type="ECO:0000255" key="1">
    <source>
        <dbReference type="HAMAP-Rule" id="MF_00480"/>
    </source>
</evidence>
<evidence type="ECO:0000305" key="2"/>
<gene>
    <name evidence="1" type="primary">rpsG</name>
    <name type="ordered locus">Arad_1967</name>
</gene>
<accession>B9JDS5</accession>
<dbReference type="EMBL" id="CP000628">
    <property type="protein sequence ID" value="ACM26276.1"/>
    <property type="molecule type" value="Genomic_DNA"/>
</dbReference>
<dbReference type="RefSeq" id="WP_007702208.1">
    <property type="nucleotide sequence ID" value="NC_011985.1"/>
</dbReference>
<dbReference type="SMR" id="B9JDS5"/>
<dbReference type="STRING" id="311403.Arad_1967"/>
<dbReference type="GeneID" id="86848163"/>
<dbReference type="KEGG" id="ara:Arad_1967"/>
<dbReference type="eggNOG" id="COG0049">
    <property type="taxonomic scope" value="Bacteria"/>
</dbReference>
<dbReference type="HOGENOM" id="CLU_072226_1_1_5"/>
<dbReference type="Proteomes" id="UP000001600">
    <property type="component" value="Chromosome 1"/>
</dbReference>
<dbReference type="GO" id="GO:0015935">
    <property type="term" value="C:small ribosomal subunit"/>
    <property type="evidence" value="ECO:0007669"/>
    <property type="project" value="InterPro"/>
</dbReference>
<dbReference type="GO" id="GO:0019843">
    <property type="term" value="F:rRNA binding"/>
    <property type="evidence" value="ECO:0007669"/>
    <property type="project" value="UniProtKB-UniRule"/>
</dbReference>
<dbReference type="GO" id="GO:0003735">
    <property type="term" value="F:structural constituent of ribosome"/>
    <property type="evidence" value="ECO:0007669"/>
    <property type="project" value="InterPro"/>
</dbReference>
<dbReference type="GO" id="GO:0000049">
    <property type="term" value="F:tRNA binding"/>
    <property type="evidence" value="ECO:0007669"/>
    <property type="project" value="UniProtKB-UniRule"/>
</dbReference>
<dbReference type="GO" id="GO:0006412">
    <property type="term" value="P:translation"/>
    <property type="evidence" value="ECO:0007669"/>
    <property type="project" value="UniProtKB-UniRule"/>
</dbReference>
<dbReference type="CDD" id="cd14869">
    <property type="entry name" value="uS7_Bacteria"/>
    <property type="match status" value="1"/>
</dbReference>
<dbReference type="FunFam" id="1.10.455.10:FF:000001">
    <property type="entry name" value="30S ribosomal protein S7"/>
    <property type="match status" value="1"/>
</dbReference>
<dbReference type="Gene3D" id="1.10.455.10">
    <property type="entry name" value="Ribosomal protein S7 domain"/>
    <property type="match status" value="1"/>
</dbReference>
<dbReference type="HAMAP" id="MF_00480_B">
    <property type="entry name" value="Ribosomal_uS7_B"/>
    <property type="match status" value="1"/>
</dbReference>
<dbReference type="InterPro" id="IPR000235">
    <property type="entry name" value="Ribosomal_uS7"/>
</dbReference>
<dbReference type="InterPro" id="IPR005717">
    <property type="entry name" value="Ribosomal_uS7_bac/org-type"/>
</dbReference>
<dbReference type="InterPro" id="IPR020606">
    <property type="entry name" value="Ribosomal_uS7_CS"/>
</dbReference>
<dbReference type="InterPro" id="IPR023798">
    <property type="entry name" value="Ribosomal_uS7_dom"/>
</dbReference>
<dbReference type="InterPro" id="IPR036823">
    <property type="entry name" value="Ribosomal_uS7_dom_sf"/>
</dbReference>
<dbReference type="NCBIfam" id="TIGR01029">
    <property type="entry name" value="rpsG_bact"/>
    <property type="match status" value="1"/>
</dbReference>
<dbReference type="PANTHER" id="PTHR11205">
    <property type="entry name" value="RIBOSOMAL PROTEIN S7"/>
    <property type="match status" value="1"/>
</dbReference>
<dbReference type="Pfam" id="PF00177">
    <property type="entry name" value="Ribosomal_S7"/>
    <property type="match status" value="1"/>
</dbReference>
<dbReference type="PIRSF" id="PIRSF002122">
    <property type="entry name" value="RPS7p_RPS7a_RPS5e_RPS7o"/>
    <property type="match status" value="1"/>
</dbReference>
<dbReference type="SUPFAM" id="SSF47973">
    <property type="entry name" value="Ribosomal protein S7"/>
    <property type="match status" value="1"/>
</dbReference>
<dbReference type="PROSITE" id="PS00052">
    <property type="entry name" value="RIBOSOMAL_S7"/>
    <property type="match status" value="1"/>
</dbReference>